<feature type="chain" id="PRO_0000346155" description="NBPF family member NBPF6-like protein">
    <location>
        <begin position="1"/>
        <end position="224"/>
    </location>
</feature>
<feature type="domain" description="Olduvai" evidence="1">
    <location>
        <begin position="159"/>
        <end position="224"/>
    </location>
</feature>
<feature type="region of interest" description="Disordered" evidence="2">
    <location>
        <begin position="198"/>
        <end position="224"/>
    </location>
</feature>
<feature type="compositionally biased region" description="Basic and acidic residues" evidence="2">
    <location>
        <begin position="198"/>
        <end position="209"/>
    </location>
</feature>
<organism>
    <name type="scientific">Bos taurus</name>
    <name type="common">Bovine</name>
    <dbReference type="NCBI Taxonomy" id="9913"/>
    <lineage>
        <taxon>Eukaryota</taxon>
        <taxon>Metazoa</taxon>
        <taxon>Chordata</taxon>
        <taxon>Craniata</taxon>
        <taxon>Vertebrata</taxon>
        <taxon>Euteleostomi</taxon>
        <taxon>Mammalia</taxon>
        <taxon>Eutheria</taxon>
        <taxon>Laurasiatheria</taxon>
        <taxon>Artiodactyla</taxon>
        <taxon>Ruminantia</taxon>
        <taxon>Pecora</taxon>
        <taxon>Bovidae</taxon>
        <taxon>Bovinae</taxon>
        <taxon>Bos</taxon>
    </lineage>
</organism>
<name>NBP6L_BOVIN</name>
<sequence>MGLLETNQYLHSQLEKSKQDFRDLTEKLLTSQATVYSLAKQLQKYKCEEYKDLIESVLEEEAPFEEGNLAEKRRLATGLGRYDSLIEAQARELTCLRQKIQEGEGVCHLFTQHAKNTIKTFESFIKTTDMTYYQRQRFCELLAQGSQMAERLASKLSTENHHDRKDEEGQESLAARLSMGLQGEEVNEVLEDSLDEKYLTHSSHHDSHRPPSSIASVCDVQDQL</sequence>
<proteinExistence type="evidence at transcript level"/>
<accession>Q32LC2</accession>
<evidence type="ECO:0000255" key="1">
    <source>
        <dbReference type="PROSITE-ProRule" id="PRU00647"/>
    </source>
</evidence>
<evidence type="ECO:0000256" key="2">
    <source>
        <dbReference type="SAM" id="MobiDB-lite"/>
    </source>
</evidence>
<evidence type="ECO:0000305" key="3"/>
<protein>
    <recommendedName>
        <fullName>NBPF family member NBPF6-like protein</fullName>
    </recommendedName>
    <alternativeName>
        <fullName>Neuroblastoma breakpoint family member 6-like protein</fullName>
    </alternativeName>
</protein>
<dbReference type="EMBL" id="BC109651">
    <property type="protein sequence ID" value="AAI09652.1"/>
    <property type="molecule type" value="mRNA"/>
</dbReference>
<dbReference type="RefSeq" id="NP_001070505.2">
    <property type="nucleotide sequence ID" value="NM_001077037.2"/>
</dbReference>
<dbReference type="RefSeq" id="NP_001231233.1">
    <property type="nucleotide sequence ID" value="NM_001244304.1"/>
</dbReference>
<dbReference type="RefSeq" id="XP_059740890.1">
    <property type="nucleotide sequence ID" value="XM_059884907.1"/>
</dbReference>
<dbReference type="SMR" id="Q32LC2"/>
<dbReference type="PaxDb" id="9913-ENSBTAP00000030838"/>
<dbReference type="GeneID" id="767972"/>
<dbReference type="KEGG" id="bta:767972"/>
<dbReference type="eggNOG" id="ENOG502RU1I">
    <property type="taxonomic scope" value="Eukaryota"/>
</dbReference>
<dbReference type="HOGENOM" id="CLU_075084_0_0_1"/>
<dbReference type="InParanoid" id="Q32LC2"/>
<dbReference type="OrthoDB" id="9665129at2759"/>
<dbReference type="Proteomes" id="UP000009136">
    <property type="component" value="Unplaced"/>
</dbReference>
<dbReference type="InterPro" id="IPR055306">
    <property type="entry name" value="NBPF"/>
</dbReference>
<dbReference type="InterPro" id="IPR010630">
    <property type="entry name" value="Olduvai_dom"/>
</dbReference>
<dbReference type="PANTHER" id="PTHR14199">
    <property type="entry name" value="NEUROBLASTOMA BREAKPOINT FAMILY MEMBER 6-LIKE PROTEIN"/>
    <property type="match status" value="1"/>
</dbReference>
<dbReference type="PANTHER" id="PTHR14199:SF38">
    <property type="entry name" value="NEUROBLASTOMA BREAKPOINT FAMILY MEMBER 6-LIKE PROTEIN"/>
    <property type="match status" value="1"/>
</dbReference>
<dbReference type="Pfam" id="PF06758">
    <property type="entry name" value="Olduvai"/>
    <property type="match status" value="1"/>
</dbReference>
<dbReference type="SMART" id="SM01148">
    <property type="entry name" value="DUF1220"/>
    <property type="match status" value="1"/>
</dbReference>
<dbReference type="PROSITE" id="PS51316">
    <property type="entry name" value="ODV"/>
    <property type="match status" value="1"/>
</dbReference>
<keyword id="KW-1185">Reference proteome</keyword>
<reference key="1">
    <citation type="submission" date="2005-11" db="EMBL/GenBank/DDBJ databases">
        <authorList>
            <consortium name="NIH - Mammalian Gene Collection (MGC) project"/>
        </authorList>
    </citation>
    <scope>NUCLEOTIDE SEQUENCE [LARGE SCALE MRNA]</scope>
    <source>
        <strain>Crossbred X Angus</strain>
        <tissue>Liver</tissue>
    </source>
</reference>
<comment type="similarity">
    <text evidence="3">Belongs to the NBPF family.</text>
</comment>